<gene>
    <name evidence="1" type="primary">mnmA</name>
    <name type="ordered locus">UUR10_0445</name>
</gene>
<accession>B5ZBP8</accession>
<feature type="chain" id="PRO_1000096308" description="tRNA-specific 2-thiouridylase MnmA">
    <location>
        <begin position="1"/>
        <end position="380"/>
    </location>
</feature>
<feature type="region of interest" description="Interaction with target base in tRNA" evidence="1">
    <location>
        <begin position="108"/>
        <end position="110"/>
    </location>
</feature>
<feature type="region of interest" description="Interaction with tRNA" evidence="1">
    <location>
        <begin position="160"/>
        <end position="162"/>
    </location>
</feature>
<feature type="active site" description="Nucleophile" evidence="1">
    <location>
        <position position="113"/>
    </location>
</feature>
<feature type="active site" description="Cysteine persulfide intermediate" evidence="1">
    <location>
        <position position="210"/>
    </location>
</feature>
<feature type="binding site" evidence="1">
    <location>
        <begin position="12"/>
        <end position="19"/>
    </location>
    <ligand>
        <name>ATP</name>
        <dbReference type="ChEBI" id="CHEBI:30616"/>
    </ligand>
</feature>
<feature type="binding site" evidence="1">
    <location>
        <position position="38"/>
    </location>
    <ligand>
        <name>ATP</name>
        <dbReference type="ChEBI" id="CHEBI:30616"/>
    </ligand>
</feature>
<feature type="binding site" evidence="1">
    <location>
        <position position="138"/>
    </location>
    <ligand>
        <name>ATP</name>
        <dbReference type="ChEBI" id="CHEBI:30616"/>
    </ligand>
</feature>
<feature type="site" description="Interaction with tRNA" evidence="1">
    <location>
        <position position="139"/>
    </location>
</feature>
<feature type="site" description="Interaction with tRNA" evidence="1">
    <location>
        <position position="352"/>
    </location>
</feature>
<feature type="disulfide bond" description="Alternate" evidence="1">
    <location>
        <begin position="113"/>
        <end position="210"/>
    </location>
</feature>
<reference key="1">
    <citation type="submission" date="2008-10" db="EMBL/GenBank/DDBJ databases">
        <title>Genome sequence of Ureaplasma urealyticum serovar 10 ATCC-33699.</title>
        <authorList>
            <person name="Shrivastava S."/>
            <person name="Methe B.A."/>
            <person name="Glass J."/>
            <person name="White K."/>
            <person name="Duffy L.B."/>
        </authorList>
    </citation>
    <scope>NUCLEOTIDE SEQUENCE [LARGE SCALE GENOMIC DNA]</scope>
    <source>
        <strain>ATCC 33699 / Western</strain>
    </source>
</reference>
<sequence>MEVNTKKRVVIGLSGGVDSSVSALLLKQQGYEVIGLFMANWDTVANFENNRESDKKHQGCESELDYQDAQAVAQKIGIPLYRVEFIKEYWNNVFEYFLSEYQKNRTPNPDILCNQFIKFDSFLNYAKNELKADYIAMGHYAKVKHTNNLSYLLKATDVNKDQTYFLCNLKQTQLQNALFPIGDLTKQQVRTIAKEYGLVTANKKDSTGICFIGERNFKYFLENYIPNQPGEIVNIVNNQIVGHHMGTMYYTIGQRKGLNLGGMNERMFVCEKDINKKIIYVSPLSLEDQYLISNQALVENMNFIEPYNPQIPISVRFRHRQNLVVVNSFLCIENTNNVLINYEPAKAITPGQYAVFYQNDHCIGGGVIAQTNANHKKINF</sequence>
<comment type="function">
    <text evidence="1">Catalyzes the 2-thiolation of uridine at the wobble position (U34) of tRNA, leading to the formation of s(2)U34.</text>
</comment>
<comment type="catalytic activity">
    <reaction evidence="1">
        <text>S-sulfanyl-L-cysteinyl-[protein] + uridine(34) in tRNA + AH2 + ATP = 2-thiouridine(34) in tRNA + L-cysteinyl-[protein] + A + AMP + diphosphate + H(+)</text>
        <dbReference type="Rhea" id="RHEA:47032"/>
        <dbReference type="Rhea" id="RHEA-COMP:10131"/>
        <dbReference type="Rhea" id="RHEA-COMP:11726"/>
        <dbReference type="Rhea" id="RHEA-COMP:11727"/>
        <dbReference type="Rhea" id="RHEA-COMP:11728"/>
        <dbReference type="ChEBI" id="CHEBI:13193"/>
        <dbReference type="ChEBI" id="CHEBI:15378"/>
        <dbReference type="ChEBI" id="CHEBI:17499"/>
        <dbReference type="ChEBI" id="CHEBI:29950"/>
        <dbReference type="ChEBI" id="CHEBI:30616"/>
        <dbReference type="ChEBI" id="CHEBI:33019"/>
        <dbReference type="ChEBI" id="CHEBI:61963"/>
        <dbReference type="ChEBI" id="CHEBI:65315"/>
        <dbReference type="ChEBI" id="CHEBI:87170"/>
        <dbReference type="ChEBI" id="CHEBI:456215"/>
        <dbReference type="EC" id="2.8.1.13"/>
    </reaction>
</comment>
<comment type="subcellular location">
    <subcellularLocation>
        <location evidence="1">Cytoplasm</location>
    </subcellularLocation>
</comment>
<comment type="similarity">
    <text evidence="1">Belongs to the MnmA/TRMU family.</text>
</comment>
<name>MNMA_UREU1</name>
<proteinExistence type="inferred from homology"/>
<keyword id="KW-0067">ATP-binding</keyword>
<keyword id="KW-0963">Cytoplasm</keyword>
<keyword id="KW-1015">Disulfide bond</keyword>
<keyword id="KW-0547">Nucleotide-binding</keyword>
<keyword id="KW-0694">RNA-binding</keyword>
<keyword id="KW-0808">Transferase</keyword>
<keyword id="KW-0819">tRNA processing</keyword>
<keyword id="KW-0820">tRNA-binding</keyword>
<protein>
    <recommendedName>
        <fullName evidence="1">tRNA-specific 2-thiouridylase MnmA</fullName>
        <ecNumber evidence="1">2.8.1.13</ecNumber>
    </recommendedName>
</protein>
<evidence type="ECO:0000255" key="1">
    <source>
        <dbReference type="HAMAP-Rule" id="MF_00144"/>
    </source>
</evidence>
<organism>
    <name type="scientific">Ureaplasma urealyticum serovar 10 (strain ATCC 33699 / Western)</name>
    <dbReference type="NCBI Taxonomy" id="565575"/>
    <lineage>
        <taxon>Bacteria</taxon>
        <taxon>Bacillati</taxon>
        <taxon>Mycoplasmatota</taxon>
        <taxon>Mycoplasmoidales</taxon>
        <taxon>Mycoplasmoidaceae</taxon>
        <taxon>Ureaplasma</taxon>
    </lineage>
</organism>
<dbReference type="EC" id="2.8.1.13" evidence="1"/>
<dbReference type="EMBL" id="CP001184">
    <property type="protein sequence ID" value="ACI60205.1"/>
    <property type="molecule type" value="Genomic_DNA"/>
</dbReference>
<dbReference type="RefSeq" id="WP_004026155.1">
    <property type="nucleotide sequence ID" value="NC_011374.1"/>
</dbReference>
<dbReference type="SMR" id="B5ZBP8"/>
<dbReference type="STRING" id="565575.UUR10_0445"/>
<dbReference type="GeneID" id="93848917"/>
<dbReference type="KEGG" id="uue:UUR10_0445"/>
<dbReference type="eggNOG" id="COG0482">
    <property type="taxonomic scope" value="Bacteria"/>
</dbReference>
<dbReference type="HOGENOM" id="CLU_035188_1_0_14"/>
<dbReference type="OrthoDB" id="9800696at2"/>
<dbReference type="Proteomes" id="UP000002018">
    <property type="component" value="Chromosome"/>
</dbReference>
<dbReference type="GO" id="GO:0005737">
    <property type="term" value="C:cytoplasm"/>
    <property type="evidence" value="ECO:0007669"/>
    <property type="project" value="UniProtKB-SubCell"/>
</dbReference>
<dbReference type="GO" id="GO:0005524">
    <property type="term" value="F:ATP binding"/>
    <property type="evidence" value="ECO:0007669"/>
    <property type="project" value="UniProtKB-KW"/>
</dbReference>
<dbReference type="GO" id="GO:0000049">
    <property type="term" value="F:tRNA binding"/>
    <property type="evidence" value="ECO:0007669"/>
    <property type="project" value="UniProtKB-KW"/>
</dbReference>
<dbReference type="GO" id="GO:0103016">
    <property type="term" value="F:tRNA-uridine 2-sulfurtransferase activity"/>
    <property type="evidence" value="ECO:0007669"/>
    <property type="project" value="UniProtKB-EC"/>
</dbReference>
<dbReference type="GO" id="GO:0002143">
    <property type="term" value="P:tRNA wobble position uridine thiolation"/>
    <property type="evidence" value="ECO:0007669"/>
    <property type="project" value="TreeGrafter"/>
</dbReference>
<dbReference type="CDD" id="cd01998">
    <property type="entry name" value="MnmA_TRMU-like"/>
    <property type="match status" value="1"/>
</dbReference>
<dbReference type="FunFam" id="2.30.30.280:FF:000001">
    <property type="entry name" value="tRNA-specific 2-thiouridylase MnmA"/>
    <property type="match status" value="1"/>
</dbReference>
<dbReference type="FunFam" id="3.40.50.620:FF:000004">
    <property type="entry name" value="tRNA-specific 2-thiouridylase MnmA"/>
    <property type="match status" value="1"/>
</dbReference>
<dbReference type="Gene3D" id="2.30.30.280">
    <property type="entry name" value="Adenine nucleotide alpha hydrolases-like domains"/>
    <property type="match status" value="1"/>
</dbReference>
<dbReference type="Gene3D" id="3.40.50.620">
    <property type="entry name" value="HUPs"/>
    <property type="match status" value="1"/>
</dbReference>
<dbReference type="Gene3D" id="2.40.30.10">
    <property type="entry name" value="Translation factors"/>
    <property type="match status" value="1"/>
</dbReference>
<dbReference type="HAMAP" id="MF_00144">
    <property type="entry name" value="tRNA_thiouridyl_MnmA"/>
    <property type="match status" value="1"/>
</dbReference>
<dbReference type="InterPro" id="IPR004506">
    <property type="entry name" value="MnmA-like"/>
</dbReference>
<dbReference type="InterPro" id="IPR046885">
    <property type="entry name" value="MnmA-like_C"/>
</dbReference>
<dbReference type="InterPro" id="IPR046884">
    <property type="entry name" value="MnmA-like_central"/>
</dbReference>
<dbReference type="InterPro" id="IPR023382">
    <property type="entry name" value="MnmA-like_central_sf"/>
</dbReference>
<dbReference type="InterPro" id="IPR014729">
    <property type="entry name" value="Rossmann-like_a/b/a_fold"/>
</dbReference>
<dbReference type="NCBIfam" id="NF001138">
    <property type="entry name" value="PRK00143.1"/>
    <property type="match status" value="1"/>
</dbReference>
<dbReference type="NCBIfam" id="TIGR00420">
    <property type="entry name" value="trmU"/>
    <property type="match status" value="1"/>
</dbReference>
<dbReference type="PANTHER" id="PTHR11933:SF5">
    <property type="entry name" value="MITOCHONDRIAL TRNA-SPECIFIC 2-THIOURIDYLASE 1"/>
    <property type="match status" value="1"/>
</dbReference>
<dbReference type="PANTHER" id="PTHR11933">
    <property type="entry name" value="TRNA 5-METHYLAMINOMETHYL-2-THIOURIDYLATE -METHYLTRANSFERASE"/>
    <property type="match status" value="1"/>
</dbReference>
<dbReference type="Pfam" id="PF03054">
    <property type="entry name" value="tRNA_Me_trans"/>
    <property type="match status" value="1"/>
</dbReference>
<dbReference type="Pfam" id="PF20258">
    <property type="entry name" value="tRNA_Me_trans_C"/>
    <property type="match status" value="1"/>
</dbReference>
<dbReference type="Pfam" id="PF20259">
    <property type="entry name" value="tRNA_Me_trans_M"/>
    <property type="match status" value="1"/>
</dbReference>
<dbReference type="SUPFAM" id="SSF52402">
    <property type="entry name" value="Adenine nucleotide alpha hydrolases-like"/>
    <property type="match status" value="1"/>
</dbReference>